<name>DCUP_ECOBW</name>
<gene>
    <name evidence="1" type="primary">hemE</name>
    <name type="ordered locus">BWG_3657</name>
</gene>
<reference key="1">
    <citation type="journal article" date="2009" name="J. Bacteriol.">
        <title>Genomic sequencing reveals regulatory mutations and recombinational events in the widely used MC4100 lineage of Escherichia coli K-12.</title>
        <authorList>
            <person name="Ferenci T."/>
            <person name="Zhou Z."/>
            <person name="Betteridge T."/>
            <person name="Ren Y."/>
            <person name="Liu Y."/>
            <person name="Feng L."/>
            <person name="Reeves P.R."/>
            <person name="Wang L."/>
        </authorList>
    </citation>
    <scope>NUCLEOTIDE SEQUENCE [LARGE SCALE GENOMIC DNA]</scope>
    <source>
        <strain>K12 / MC4100 / BW2952</strain>
    </source>
</reference>
<sequence length="354" mass="39248">MTELKNDRYLRALLRQPVDVTPVWMMRQAGRYLPEYKATRAQAGDFMSLCKNAELACEVTLQPLRRYPLDAAILFSDILTVPDAMGLGLYFEAGEGPRFTSPVTCKADVDKLPIPDPEDELGYVMNAVRTIRRELKGEVPLIGFSGSPWTLATYMVEGGSSKAFTVIKKMMYADPQALHALLDKLAKSVTLYLNAQIKAGAQAVMIFDTWGGVLTGRDYQQFSLYYMHKIVDGLLRENDGRRVPVTLFTKGGGQWLEAMAETGCDALGLDWTTDIADARRRVGNKVALQGNMDPSMLYAPPARIEEEVATILAGFGHGEGHVFNLGHGIHQDVPPEHAGVFVEAVHRLSEQYHR</sequence>
<keyword id="KW-0963">Cytoplasm</keyword>
<keyword id="KW-0210">Decarboxylase</keyword>
<keyword id="KW-0456">Lyase</keyword>
<keyword id="KW-0627">Porphyrin biosynthesis</keyword>
<evidence type="ECO:0000255" key="1">
    <source>
        <dbReference type="HAMAP-Rule" id="MF_00218"/>
    </source>
</evidence>
<feature type="chain" id="PRO_1000204230" description="Uroporphyrinogen decarboxylase">
    <location>
        <begin position="1"/>
        <end position="354"/>
    </location>
</feature>
<feature type="binding site" evidence="1">
    <location>
        <begin position="27"/>
        <end position="31"/>
    </location>
    <ligand>
        <name>substrate</name>
    </ligand>
</feature>
<feature type="binding site" evidence="1">
    <location>
        <position position="77"/>
    </location>
    <ligand>
        <name>substrate</name>
    </ligand>
</feature>
<feature type="binding site" evidence="1">
    <location>
        <position position="154"/>
    </location>
    <ligand>
        <name>substrate</name>
    </ligand>
</feature>
<feature type="binding site" evidence="1">
    <location>
        <position position="209"/>
    </location>
    <ligand>
        <name>substrate</name>
    </ligand>
</feature>
<feature type="binding site" evidence="1">
    <location>
        <position position="327"/>
    </location>
    <ligand>
        <name>substrate</name>
    </ligand>
</feature>
<feature type="site" description="Transition state stabilizer" evidence="1">
    <location>
        <position position="77"/>
    </location>
</feature>
<comment type="function">
    <text evidence="1">Catalyzes the decarboxylation of four acetate groups of uroporphyrinogen-III to yield coproporphyrinogen-III.</text>
</comment>
<comment type="catalytic activity">
    <reaction evidence="1">
        <text>uroporphyrinogen III + 4 H(+) = coproporphyrinogen III + 4 CO2</text>
        <dbReference type="Rhea" id="RHEA:19865"/>
        <dbReference type="ChEBI" id="CHEBI:15378"/>
        <dbReference type="ChEBI" id="CHEBI:16526"/>
        <dbReference type="ChEBI" id="CHEBI:57308"/>
        <dbReference type="ChEBI" id="CHEBI:57309"/>
        <dbReference type="EC" id="4.1.1.37"/>
    </reaction>
</comment>
<comment type="pathway">
    <text evidence="1">Porphyrin-containing compound metabolism; protoporphyrin-IX biosynthesis; coproporphyrinogen-III from 5-aminolevulinate: step 4/4.</text>
</comment>
<comment type="subunit">
    <text evidence="1">Homodimer.</text>
</comment>
<comment type="subcellular location">
    <subcellularLocation>
        <location evidence="1">Cytoplasm</location>
    </subcellularLocation>
</comment>
<comment type="similarity">
    <text evidence="1">Belongs to the uroporphyrinogen decarboxylase family.</text>
</comment>
<organism>
    <name type="scientific">Escherichia coli (strain K12 / MC4100 / BW2952)</name>
    <dbReference type="NCBI Taxonomy" id="595496"/>
    <lineage>
        <taxon>Bacteria</taxon>
        <taxon>Pseudomonadati</taxon>
        <taxon>Pseudomonadota</taxon>
        <taxon>Gammaproteobacteria</taxon>
        <taxon>Enterobacterales</taxon>
        <taxon>Enterobacteriaceae</taxon>
        <taxon>Escherichia</taxon>
    </lineage>
</organism>
<proteinExistence type="inferred from homology"/>
<protein>
    <recommendedName>
        <fullName evidence="1">Uroporphyrinogen decarboxylase</fullName>
        <shortName evidence="1">UPD</shortName>
        <shortName evidence="1">URO-D</shortName>
        <ecNumber evidence="1">4.1.1.37</ecNumber>
    </recommendedName>
</protein>
<dbReference type="EC" id="4.1.1.37" evidence="1"/>
<dbReference type="EMBL" id="CP001396">
    <property type="protein sequence ID" value="ACR65774.1"/>
    <property type="molecule type" value="Genomic_DNA"/>
</dbReference>
<dbReference type="RefSeq" id="WP_000137657.1">
    <property type="nucleotide sequence ID" value="NC_012759.1"/>
</dbReference>
<dbReference type="SMR" id="C5A0T8"/>
<dbReference type="GeneID" id="93777897"/>
<dbReference type="KEGG" id="ebw:BWG_3657"/>
<dbReference type="HOGENOM" id="CLU_040933_0_0_6"/>
<dbReference type="UniPathway" id="UPA00251">
    <property type="reaction ID" value="UER00321"/>
</dbReference>
<dbReference type="GO" id="GO:0005829">
    <property type="term" value="C:cytosol"/>
    <property type="evidence" value="ECO:0007669"/>
    <property type="project" value="TreeGrafter"/>
</dbReference>
<dbReference type="GO" id="GO:0004853">
    <property type="term" value="F:uroporphyrinogen decarboxylase activity"/>
    <property type="evidence" value="ECO:0007669"/>
    <property type="project" value="UniProtKB-UniRule"/>
</dbReference>
<dbReference type="GO" id="GO:0019353">
    <property type="term" value="P:protoporphyrinogen IX biosynthetic process from glutamate"/>
    <property type="evidence" value="ECO:0007669"/>
    <property type="project" value="TreeGrafter"/>
</dbReference>
<dbReference type="CDD" id="cd00717">
    <property type="entry name" value="URO-D"/>
    <property type="match status" value="1"/>
</dbReference>
<dbReference type="FunFam" id="3.20.20.210:FF:000001">
    <property type="entry name" value="Uroporphyrinogen decarboxylase"/>
    <property type="match status" value="1"/>
</dbReference>
<dbReference type="Gene3D" id="3.20.20.210">
    <property type="match status" value="1"/>
</dbReference>
<dbReference type="HAMAP" id="MF_00218">
    <property type="entry name" value="URO_D"/>
    <property type="match status" value="1"/>
</dbReference>
<dbReference type="InterPro" id="IPR038071">
    <property type="entry name" value="UROD/MetE-like_sf"/>
</dbReference>
<dbReference type="InterPro" id="IPR006361">
    <property type="entry name" value="Uroporphyrinogen_deCO2ase_HemE"/>
</dbReference>
<dbReference type="InterPro" id="IPR000257">
    <property type="entry name" value="Uroporphyrinogen_deCOase"/>
</dbReference>
<dbReference type="NCBIfam" id="TIGR01464">
    <property type="entry name" value="hemE"/>
    <property type="match status" value="1"/>
</dbReference>
<dbReference type="PANTHER" id="PTHR21091">
    <property type="entry name" value="METHYLTETRAHYDROFOLATE:HOMOCYSTEINE METHYLTRANSFERASE RELATED"/>
    <property type="match status" value="1"/>
</dbReference>
<dbReference type="PANTHER" id="PTHR21091:SF169">
    <property type="entry name" value="UROPORPHYRINOGEN DECARBOXYLASE"/>
    <property type="match status" value="1"/>
</dbReference>
<dbReference type="Pfam" id="PF01208">
    <property type="entry name" value="URO-D"/>
    <property type="match status" value="1"/>
</dbReference>
<dbReference type="SUPFAM" id="SSF51726">
    <property type="entry name" value="UROD/MetE-like"/>
    <property type="match status" value="1"/>
</dbReference>
<dbReference type="PROSITE" id="PS00906">
    <property type="entry name" value="UROD_1"/>
    <property type="match status" value="1"/>
</dbReference>
<dbReference type="PROSITE" id="PS00907">
    <property type="entry name" value="UROD_2"/>
    <property type="match status" value="1"/>
</dbReference>
<accession>C5A0T8</accession>